<accession>Q70IB2</accession>
<accession>F1MSQ3</accession>
<gene>
    <name type="primary">RNASE10</name>
</gene>
<feature type="signal peptide" evidence="2">
    <location>
        <begin position="1"/>
        <end position="24"/>
    </location>
</feature>
<feature type="chain" id="PRO_0000045961" description="Inactive ribonuclease-like protein 10">
    <location>
        <begin position="25"/>
        <end position="211"/>
    </location>
</feature>
<feature type="sequence conflict" description="In Ref. 2; CAE45265." evidence="3" ref="2">
    <original>I</original>
    <variation>F</variation>
    <location>
        <position position="8"/>
    </location>
</feature>
<feature type="sequence conflict" description="In Ref. 2; CAE45265." evidence="3" ref="2">
    <original>V</original>
    <variation>L</variation>
    <location>
        <position position="25"/>
    </location>
</feature>
<name>RNS10_BOVIN</name>
<organism>
    <name type="scientific">Bos taurus</name>
    <name type="common">Bovine</name>
    <dbReference type="NCBI Taxonomy" id="9913"/>
    <lineage>
        <taxon>Eukaryota</taxon>
        <taxon>Metazoa</taxon>
        <taxon>Chordata</taxon>
        <taxon>Craniata</taxon>
        <taxon>Vertebrata</taxon>
        <taxon>Euteleostomi</taxon>
        <taxon>Mammalia</taxon>
        <taxon>Eutheria</taxon>
        <taxon>Laurasiatheria</taxon>
        <taxon>Artiodactyla</taxon>
        <taxon>Ruminantia</taxon>
        <taxon>Pecora</taxon>
        <taxon>Bovidae</taxon>
        <taxon>Bovinae</taxon>
        <taxon>Bos</taxon>
    </lineage>
</organism>
<comment type="function">
    <text evidence="1">Secreted proximal epididymal protein required for post-testicular sperm maturation and male fertility. May be involved in sperm adhesion to the egg zona pellucida. Does not have ribonuclease activity (By similarity).</text>
</comment>
<comment type="subcellular location">
    <subcellularLocation>
        <location evidence="1">Secreted</location>
    </subcellularLocation>
</comment>
<comment type="PTM">
    <text evidence="1">The N-terminus is blocked. Glycosylated (By similarity).</text>
</comment>
<comment type="similarity">
    <text evidence="3">Belongs to the pancreatic ribonuclease family.</text>
</comment>
<reference key="1">
    <citation type="journal article" date="2009" name="Genome Biol.">
        <title>A whole-genome assembly of the domestic cow, Bos taurus.</title>
        <authorList>
            <person name="Zimin A.V."/>
            <person name="Delcher A.L."/>
            <person name="Florea L."/>
            <person name="Kelley D.R."/>
            <person name="Schatz M.C."/>
            <person name="Puiu D."/>
            <person name="Hanrahan F."/>
            <person name="Pertea G."/>
            <person name="Van Tassell C.P."/>
            <person name="Sonstegard T.S."/>
            <person name="Marcais G."/>
            <person name="Roberts M."/>
            <person name="Subramanian P."/>
            <person name="Yorke J.A."/>
            <person name="Salzberg S.L."/>
        </authorList>
    </citation>
    <scope>NUCLEOTIDE SEQUENCE [LARGE SCALE GENOMIC DNA]</scope>
    <source>
        <strain>Hereford</strain>
    </source>
</reference>
<reference key="2">
    <citation type="journal article" date="2004" name="Biol. Reprod.">
        <title>Identification of a member of a new RNase A family specifically secreted by epididymal caput epithelium.</title>
        <authorList>
            <person name="Castella S."/>
            <person name="Fouchecourt S."/>
            <person name="Teixeira-Gomes A.P."/>
            <person name="Vinh J."/>
            <person name="Belghazi M."/>
            <person name="Dacheux F."/>
            <person name="Dacheux J.-L."/>
        </authorList>
    </citation>
    <scope>NUCLEOTIDE SEQUENCE [MRNA] OF 1-162</scope>
    <source>
        <tissue>Epididymis</tissue>
    </source>
</reference>
<evidence type="ECO:0000250" key="1"/>
<evidence type="ECO:0000255" key="2"/>
<evidence type="ECO:0000305" key="3"/>
<protein>
    <recommendedName>
        <fullName>Inactive ribonuclease-like protein 10</fullName>
    </recommendedName>
    <alternativeName>
        <fullName>Protein Train A</fullName>
    </alternativeName>
</protein>
<dbReference type="EMBL" id="DAAA02028331">
    <property type="status" value="NOT_ANNOTATED_CDS"/>
    <property type="molecule type" value="Genomic_DNA"/>
</dbReference>
<dbReference type="EMBL" id="AJ580633">
    <property type="protein sequence ID" value="CAE45265.1"/>
    <property type="molecule type" value="mRNA"/>
</dbReference>
<dbReference type="RefSeq" id="XP_001790572.1">
    <property type="nucleotide sequence ID" value="XM_001790520.4"/>
</dbReference>
<dbReference type="RefSeq" id="XP_002690790.1">
    <property type="nucleotide sequence ID" value="XM_002690744.6"/>
</dbReference>
<dbReference type="RefSeq" id="XP_005193663.1">
    <property type="nucleotide sequence ID" value="XM_005193606.3"/>
</dbReference>
<dbReference type="RefSeq" id="XP_005211592.1">
    <property type="nucleotide sequence ID" value="XM_005211535.5"/>
</dbReference>
<dbReference type="RefSeq" id="XP_059746777.1">
    <property type="nucleotide sequence ID" value="XM_059890794.1"/>
</dbReference>
<dbReference type="SMR" id="Q70IB2"/>
<dbReference type="FunCoup" id="Q70IB2">
    <property type="interactions" value="4"/>
</dbReference>
<dbReference type="STRING" id="9913.ENSBTAP00000043940"/>
<dbReference type="PaxDb" id="9913-ENSBTAP00000043940"/>
<dbReference type="Ensembl" id="ENSBTAT00000046664.5">
    <property type="protein sequence ID" value="ENSBTAP00000043940.3"/>
    <property type="gene ID" value="ENSBTAG00000056146.1"/>
</dbReference>
<dbReference type="Ensembl" id="ENSBTAT00000093918.1">
    <property type="protein sequence ID" value="ENSBTAP00000080158.1"/>
    <property type="gene ID" value="ENSBTAG00000056146.1"/>
</dbReference>
<dbReference type="Ensembl" id="ENSBTAT00000128620.1">
    <property type="protein sequence ID" value="ENSBTAP00000087533.1"/>
    <property type="gene ID" value="ENSBTAG00000056146.1"/>
</dbReference>
<dbReference type="GeneID" id="100140137"/>
<dbReference type="KEGG" id="bta:100140137"/>
<dbReference type="CTD" id="338879"/>
<dbReference type="VEuPathDB" id="HostDB:ENSBTAG00000032869"/>
<dbReference type="eggNOG" id="ENOG502RPGF">
    <property type="taxonomic scope" value="Eukaryota"/>
</dbReference>
<dbReference type="GeneTree" id="ENSGT00730000111443"/>
<dbReference type="HOGENOM" id="CLU_1280301_0_0_1"/>
<dbReference type="InParanoid" id="Q70IB2"/>
<dbReference type="OMA" id="GQVTPHC"/>
<dbReference type="OrthoDB" id="9830114at2759"/>
<dbReference type="TreeFam" id="TF337410"/>
<dbReference type="Proteomes" id="UP000009136">
    <property type="component" value="Chromosome 10"/>
</dbReference>
<dbReference type="Bgee" id="ENSBTAG00000032869">
    <property type="expression patterns" value="Expressed in caput epididymis and 94 other cell types or tissues"/>
</dbReference>
<dbReference type="GO" id="GO:0005576">
    <property type="term" value="C:extracellular region"/>
    <property type="evidence" value="ECO:0007669"/>
    <property type="project" value="UniProtKB-SubCell"/>
</dbReference>
<dbReference type="GO" id="GO:0003676">
    <property type="term" value="F:nucleic acid binding"/>
    <property type="evidence" value="ECO:0007669"/>
    <property type="project" value="InterPro"/>
</dbReference>
<dbReference type="GO" id="GO:0050830">
    <property type="term" value="P:defense response to Gram-positive bacterium"/>
    <property type="evidence" value="ECO:0000318"/>
    <property type="project" value="GO_Central"/>
</dbReference>
<dbReference type="GO" id="GO:0034113">
    <property type="term" value="P:heterotypic cell-cell adhesion"/>
    <property type="evidence" value="ECO:0000250"/>
    <property type="project" value="UniProtKB"/>
</dbReference>
<dbReference type="GO" id="GO:0022409">
    <property type="term" value="P:positive regulation of cell-cell adhesion"/>
    <property type="evidence" value="ECO:0000250"/>
    <property type="project" value="UniProtKB"/>
</dbReference>
<dbReference type="GO" id="GO:1902093">
    <property type="term" value="P:positive regulation of flagellated sperm motility"/>
    <property type="evidence" value="ECO:0000250"/>
    <property type="project" value="UniProtKB"/>
</dbReference>
<dbReference type="GO" id="GO:0080154">
    <property type="term" value="P:regulation of fertilization"/>
    <property type="evidence" value="ECO:0000250"/>
    <property type="project" value="UniProtKB"/>
</dbReference>
<dbReference type="GO" id="GO:0007338">
    <property type="term" value="P:single fertilization"/>
    <property type="evidence" value="ECO:0007669"/>
    <property type="project" value="UniProtKB-KW"/>
</dbReference>
<dbReference type="CDD" id="cd00163">
    <property type="entry name" value="RNase_A"/>
    <property type="match status" value="1"/>
</dbReference>
<dbReference type="FunFam" id="3.10.130.10:FF:000002">
    <property type="entry name" value="Inactive ribonuclease-like protein 10"/>
    <property type="match status" value="1"/>
</dbReference>
<dbReference type="Gene3D" id="3.10.130.10">
    <property type="entry name" value="Ribonuclease A-like domain"/>
    <property type="match status" value="1"/>
</dbReference>
<dbReference type="InterPro" id="IPR001427">
    <property type="entry name" value="RNaseA"/>
</dbReference>
<dbReference type="InterPro" id="IPR036816">
    <property type="entry name" value="RNaseA-like_dom_sf"/>
</dbReference>
<dbReference type="InterPro" id="IPR023412">
    <property type="entry name" value="RNaseA_domain"/>
</dbReference>
<dbReference type="PANTHER" id="PTHR11437:SF63">
    <property type="entry name" value="INACTIVE RIBONUCLEASE-LIKE PROTEIN 10"/>
    <property type="match status" value="1"/>
</dbReference>
<dbReference type="PANTHER" id="PTHR11437">
    <property type="entry name" value="RIBONUCLEASE"/>
    <property type="match status" value="1"/>
</dbReference>
<dbReference type="Pfam" id="PF00074">
    <property type="entry name" value="RnaseA"/>
    <property type="match status" value="1"/>
</dbReference>
<dbReference type="PRINTS" id="PR00794">
    <property type="entry name" value="RIBONUCLEASE"/>
</dbReference>
<dbReference type="SMART" id="SM00092">
    <property type="entry name" value="RNAse_Pc"/>
    <property type="match status" value="1"/>
</dbReference>
<dbReference type="SUPFAM" id="SSF54076">
    <property type="entry name" value="RNase A-like"/>
    <property type="match status" value="1"/>
</dbReference>
<proteinExistence type="evidence at transcript level"/>
<keyword id="KW-0130">Cell adhesion</keyword>
<keyword id="KW-0278">Fertilization</keyword>
<keyword id="KW-0325">Glycoprotein</keyword>
<keyword id="KW-1185">Reference proteome</keyword>
<keyword id="KW-0964">Secreted</keyword>
<keyword id="KW-0732">Signal</keyword>
<sequence>MKLTLVQIFFMMLLLLLGLGVGLGVGLQMAAAVLEESDQLLDEFLSSDSQDKAEATKEGLASRSTETLLVSNKEVVQPEDTIISEDEVGGDRMLRAEVLLHSNKDYLRSDVMDRECNALMALKVKSKDHTCIPQYIFIHEELDAVKAVCKSPAVACDLKGGKCHKSPRPFDLTFCKLSKSGQVIPHCNYVTFILEKYILMSCSDMKVQITS</sequence>